<sequence length="325" mass="36926">MSETTSWQPSASVANLLKRASIIAAIRRFFTDRGVLEVETPAMSQATVTDIFLYPFQTRFVGPGAADGMTMYLMTSPEYHMKRLLAAGSGPIFQLCRSFRNEESGRHHNPEFTMLEWYRPHYDMYRLMNEVDDLLQQVLDCESAEMLSYQQAFLRHLELDPLSVDKAQLREAAEKLGLGDIACREDDRDSLVQMLFTFGVEPHIGRDKPAFVYHFPATQASLAEISSEDHRVAERFEVYFKGIELANGFRELTDADEQRQRFEQDNRKRAARDLPQQPIDENLLAALKHGLPECAGVALGVDRLIMLALNAEKLSDVIAFSVERA</sequence>
<feature type="chain" id="PRO_1000203725" description="Elongation factor P--(R)-beta-lysine ligase">
    <location>
        <begin position="1"/>
        <end position="325"/>
    </location>
</feature>
<feature type="binding site" evidence="1">
    <location>
        <begin position="76"/>
        <end position="78"/>
    </location>
    <ligand>
        <name>substrate</name>
    </ligand>
</feature>
<feature type="binding site" evidence="1">
    <location>
        <begin position="100"/>
        <end position="102"/>
    </location>
    <ligand>
        <name>ATP</name>
        <dbReference type="ChEBI" id="CHEBI:30616"/>
    </ligand>
</feature>
<feature type="binding site" evidence="1">
    <location>
        <position position="109"/>
    </location>
    <ligand>
        <name>ATP</name>
        <dbReference type="ChEBI" id="CHEBI:30616"/>
    </ligand>
</feature>
<feature type="binding site" evidence="1">
    <location>
        <position position="118"/>
    </location>
    <ligand>
        <name>substrate</name>
    </ligand>
</feature>
<feature type="binding site" evidence="1">
    <location>
        <begin position="244"/>
        <end position="245"/>
    </location>
    <ligand>
        <name>ATP</name>
        <dbReference type="ChEBI" id="CHEBI:30616"/>
    </ligand>
</feature>
<feature type="binding site" evidence="1">
    <location>
        <position position="251"/>
    </location>
    <ligand>
        <name>substrate</name>
    </ligand>
</feature>
<feature type="binding site" evidence="1">
    <location>
        <position position="300"/>
    </location>
    <ligand>
        <name>ATP</name>
        <dbReference type="ChEBI" id="CHEBI:30616"/>
    </ligand>
</feature>
<protein>
    <recommendedName>
        <fullName evidence="1">Elongation factor P--(R)-beta-lysine ligase</fullName>
        <shortName evidence="1">EF-P--(R)-beta-lysine ligase</shortName>
        <ecNumber evidence="1">6.3.2.-</ecNumber>
    </recommendedName>
    <alternativeName>
        <fullName evidence="1">EF-P post-translational modification enzyme A</fullName>
    </alternativeName>
    <alternativeName>
        <fullName evidence="1">EF-P-lysine lysyltransferase</fullName>
    </alternativeName>
</protein>
<dbReference type="EC" id="6.3.2.-" evidence="1"/>
<dbReference type="EMBL" id="CP001657">
    <property type="protein sequence ID" value="ACT14772.1"/>
    <property type="molecule type" value="Genomic_DNA"/>
</dbReference>
<dbReference type="RefSeq" id="WP_015841883.1">
    <property type="nucleotide sequence ID" value="NC_012917.1"/>
</dbReference>
<dbReference type="SMR" id="C6DFN3"/>
<dbReference type="STRING" id="561230.PC1_3757"/>
<dbReference type="GeneID" id="67792352"/>
<dbReference type="KEGG" id="pct:PC1_3757"/>
<dbReference type="eggNOG" id="COG2269">
    <property type="taxonomic scope" value="Bacteria"/>
</dbReference>
<dbReference type="HOGENOM" id="CLU_008255_1_1_6"/>
<dbReference type="OrthoDB" id="9802326at2"/>
<dbReference type="Proteomes" id="UP000002736">
    <property type="component" value="Chromosome"/>
</dbReference>
<dbReference type="GO" id="GO:0005829">
    <property type="term" value="C:cytosol"/>
    <property type="evidence" value="ECO:0007669"/>
    <property type="project" value="TreeGrafter"/>
</dbReference>
<dbReference type="GO" id="GO:0016880">
    <property type="term" value="F:acid-ammonia (or amide) ligase activity"/>
    <property type="evidence" value="ECO:0007669"/>
    <property type="project" value="UniProtKB-UniRule"/>
</dbReference>
<dbReference type="GO" id="GO:0005524">
    <property type="term" value="F:ATP binding"/>
    <property type="evidence" value="ECO:0007669"/>
    <property type="project" value="UniProtKB-UniRule"/>
</dbReference>
<dbReference type="GO" id="GO:0004824">
    <property type="term" value="F:lysine-tRNA ligase activity"/>
    <property type="evidence" value="ECO:0007669"/>
    <property type="project" value="InterPro"/>
</dbReference>
<dbReference type="GO" id="GO:0000049">
    <property type="term" value="F:tRNA binding"/>
    <property type="evidence" value="ECO:0007669"/>
    <property type="project" value="TreeGrafter"/>
</dbReference>
<dbReference type="GO" id="GO:0006430">
    <property type="term" value="P:lysyl-tRNA aminoacylation"/>
    <property type="evidence" value="ECO:0007669"/>
    <property type="project" value="InterPro"/>
</dbReference>
<dbReference type="FunFam" id="3.30.930.10:FF:000017">
    <property type="entry name" value="Elongation factor P--(R)-beta-lysine ligase"/>
    <property type="match status" value="1"/>
</dbReference>
<dbReference type="Gene3D" id="3.30.930.10">
    <property type="entry name" value="Bira Bifunctional Protein, Domain 2"/>
    <property type="match status" value="1"/>
</dbReference>
<dbReference type="HAMAP" id="MF_00174">
    <property type="entry name" value="EF_P_modif_A"/>
    <property type="match status" value="1"/>
</dbReference>
<dbReference type="InterPro" id="IPR004364">
    <property type="entry name" value="Aa-tRNA-synt_II"/>
</dbReference>
<dbReference type="InterPro" id="IPR006195">
    <property type="entry name" value="aa-tRNA-synth_II"/>
</dbReference>
<dbReference type="InterPro" id="IPR045864">
    <property type="entry name" value="aa-tRNA-synth_II/BPL/LPL"/>
</dbReference>
<dbReference type="InterPro" id="IPR004525">
    <property type="entry name" value="EpmA"/>
</dbReference>
<dbReference type="InterPro" id="IPR018149">
    <property type="entry name" value="Lys-tRNA-synth_II_C"/>
</dbReference>
<dbReference type="NCBIfam" id="TIGR00462">
    <property type="entry name" value="genX"/>
    <property type="match status" value="1"/>
</dbReference>
<dbReference type="NCBIfam" id="NF006828">
    <property type="entry name" value="PRK09350.1"/>
    <property type="match status" value="1"/>
</dbReference>
<dbReference type="PANTHER" id="PTHR42918:SF6">
    <property type="entry name" value="ELONGATION FACTOR P--(R)-BETA-LYSINE LIGASE"/>
    <property type="match status" value="1"/>
</dbReference>
<dbReference type="PANTHER" id="PTHR42918">
    <property type="entry name" value="LYSYL-TRNA SYNTHETASE"/>
    <property type="match status" value="1"/>
</dbReference>
<dbReference type="Pfam" id="PF00152">
    <property type="entry name" value="tRNA-synt_2"/>
    <property type="match status" value="1"/>
</dbReference>
<dbReference type="PRINTS" id="PR00982">
    <property type="entry name" value="TRNASYNTHLYS"/>
</dbReference>
<dbReference type="SUPFAM" id="SSF55681">
    <property type="entry name" value="Class II aaRS and biotin synthetases"/>
    <property type="match status" value="1"/>
</dbReference>
<dbReference type="PROSITE" id="PS50862">
    <property type="entry name" value="AA_TRNA_LIGASE_II"/>
    <property type="match status" value="1"/>
</dbReference>
<reference key="1">
    <citation type="submission" date="2009-07" db="EMBL/GenBank/DDBJ databases">
        <title>Complete sequence of Pectobacterium carotovorum subsp. carotovorum PC1.</title>
        <authorList>
            <consortium name="US DOE Joint Genome Institute"/>
            <person name="Lucas S."/>
            <person name="Copeland A."/>
            <person name="Lapidus A."/>
            <person name="Glavina del Rio T."/>
            <person name="Tice H."/>
            <person name="Bruce D."/>
            <person name="Goodwin L."/>
            <person name="Pitluck S."/>
            <person name="Munk A.C."/>
            <person name="Brettin T."/>
            <person name="Detter J.C."/>
            <person name="Han C."/>
            <person name="Tapia R."/>
            <person name="Larimer F."/>
            <person name="Land M."/>
            <person name="Hauser L."/>
            <person name="Kyrpides N."/>
            <person name="Mikhailova N."/>
            <person name="Balakrishnan V."/>
            <person name="Glasner J."/>
            <person name="Perna N.T."/>
        </authorList>
    </citation>
    <scope>NUCLEOTIDE SEQUENCE [LARGE SCALE GENOMIC DNA]</scope>
    <source>
        <strain>PC1</strain>
    </source>
</reference>
<proteinExistence type="inferred from homology"/>
<comment type="function">
    <text evidence="1">With EpmB is involved in the beta-lysylation step of the post-translational modification of translation elongation factor P (EF-P). Catalyzes the ATP-dependent activation of (R)-beta-lysine produced by EpmB, forming a lysyl-adenylate, from which the beta-lysyl moiety is then transferred to the epsilon-amino group of a conserved specific lysine residue in EF-P.</text>
</comment>
<comment type="catalytic activity">
    <reaction evidence="1">
        <text>D-beta-lysine + L-lysyl-[protein] + ATP = N(6)-((3R)-3,6-diaminohexanoyl)-L-lysyl-[protein] + AMP + diphosphate + H(+)</text>
        <dbReference type="Rhea" id="RHEA:83435"/>
        <dbReference type="Rhea" id="RHEA-COMP:9752"/>
        <dbReference type="Rhea" id="RHEA-COMP:20131"/>
        <dbReference type="ChEBI" id="CHEBI:15378"/>
        <dbReference type="ChEBI" id="CHEBI:29969"/>
        <dbReference type="ChEBI" id="CHEBI:30616"/>
        <dbReference type="ChEBI" id="CHEBI:33019"/>
        <dbReference type="ChEBI" id="CHEBI:84138"/>
        <dbReference type="ChEBI" id="CHEBI:156053"/>
        <dbReference type="ChEBI" id="CHEBI:456215"/>
    </reaction>
    <physiologicalReaction direction="left-to-right" evidence="1">
        <dbReference type="Rhea" id="RHEA:83436"/>
    </physiologicalReaction>
</comment>
<comment type="subunit">
    <text evidence="1">Homodimer.</text>
</comment>
<comment type="similarity">
    <text evidence="1">Belongs to the class-II aminoacyl-tRNA synthetase family. EpmA subfamily.</text>
</comment>
<name>EPMA_PECCP</name>
<keyword id="KW-0067">ATP-binding</keyword>
<keyword id="KW-0436">Ligase</keyword>
<keyword id="KW-0547">Nucleotide-binding</keyword>
<gene>
    <name evidence="1" type="primary">epmA</name>
    <name type="synonym">yjeA</name>
    <name type="ordered locus">PC1_3757</name>
</gene>
<accession>C6DFN3</accession>
<organism>
    <name type="scientific">Pectobacterium carotovorum subsp. carotovorum (strain PC1)</name>
    <dbReference type="NCBI Taxonomy" id="561230"/>
    <lineage>
        <taxon>Bacteria</taxon>
        <taxon>Pseudomonadati</taxon>
        <taxon>Pseudomonadota</taxon>
        <taxon>Gammaproteobacteria</taxon>
        <taxon>Enterobacterales</taxon>
        <taxon>Pectobacteriaceae</taxon>
        <taxon>Pectobacterium</taxon>
    </lineage>
</organism>
<evidence type="ECO:0000255" key="1">
    <source>
        <dbReference type="HAMAP-Rule" id="MF_00174"/>
    </source>
</evidence>